<sequence>MRHYEIIFLVHPDQSEQVGGMVERYTKLIEEDGGKIHRLEDWGRRQLAYAINNVHKAHYVMLNVECTGKALAELEDNFRYNDAVIRNLVIRRDEAVTGQSEMLKAEENRSERRERRERPEHADSAEGDDSNDSDSSDNADE</sequence>
<protein>
    <recommendedName>
        <fullName evidence="1">Small ribosomal subunit protein bS6</fullName>
    </recommendedName>
    <alternativeName>
        <fullName evidence="3">30S ribosomal protein S6</fullName>
    </alternativeName>
</protein>
<accession>Q88DE8</accession>
<feature type="chain" id="PRO_0000176820" description="Small ribosomal subunit protein bS6">
    <location>
        <begin position="1"/>
        <end position="141"/>
    </location>
</feature>
<feature type="region of interest" description="Disordered" evidence="2">
    <location>
        <begin position="96"/>
        <end position="141"/>
    </location>
</feature>
<feature type="compositionally biased region" description="Basic and acidic residues" evidence="2">
    <location>
        <begin position="103"/>
        <end position="124"/>
    </location>
</feature>
<feature type="compositionally biased region" description="Acidic residues" evidence="2">
    <location>
        <begin position="125"/>
        <end position="141"/>
    </location>
</feature>
<evidence type="ECO:0000255" key="1">
    <source>
        <dbReference type="HAMAP-Rule" id="MF_00360"/>
    </source>
</evidence>
<evidence type="ECO:0000256" key="2">
    <source>
        <dbReference type="SAM" id="MobiDB-lite"/>
    </source>
</evidence>
<evidence type="ECO:0000305" key="3"/>
<comment type="function">
    <text evidence="1">Binds together with bS18 to 16S ribosomal RNA.</text>
</comment>
<comment type="similarity">
    <text evidence="1">Belongs to the bacterial ribosomal protein bS6 family.</text>
</comment>
<reference key="1">
    <citation type="journal article" date="2002" name="Environ. Microbiol.">
        <title>Complete genome sequence and comparative analysis of the metabolically versatile Pseudomonas putida KT2440.</title>
        <authorList>
            <person name="Nelson K.E."/>
            <person name="Weinel C."/>
            <person name="Paulsen I.T."/>
            <person name="Dodson R.J."/>
            <person name="Hilbert H."/>
            <person name="Martins dos Santos V.A.P."/>
            <person name="Fouts D.E."/>
            <person name="Gill S.R."/>
            <person name="Pop M."/>
            <person name="Holmes M."/>
            <person name="Brinkac L.M."/>
            <person name="Beanan M.J."/>
            <person name="DeBoy R.T."/>
            <person name="Daugherty S.C."/>
            <person name="Kolonay J.F."/>
            <person name="Madupu R."/>
            <person name="Nelson W.C."/>
            <person name="White O."/>
            <person name="Peterson J.D."/>
            <person name="Khouri H.M."/>
            <person name="Hance I."/>
            <person name="Chris Lee P."/>
            <person name="Holtzapple E.K."/>
            <person name="Scanlan D."/>
            <person name="Tran K."/>
            <person name="Moazzez A."/>
            <person name="Utterback T.R."/>
            <person name="Rizzo M."/>
            <person name="Lee K."/>
            <person name="Kosack D."/>
            <person name="Moestl D."/>
            <person name="Wedler H."/>
            <person name="Lauber J."/>
            <person name="Stjepandic D."/>
            <person name="Hoheisel J."/>
            <person name="Straetz M."/>
            <person name="Heim S."/>
            <person name="Kiewitz C."/>
            <person name="Eisen J.A."/>
            <person name="Timmis K.N."/>
            <person name="Duesterhoeft A."/>
            <person name="Tuemmler B."/>
            <person name="Fraser C.M."/>
        </authorList>
    </citation>
    <scope>NUCLEOTIDE SEQUENCE [LARGE SCALE GENOMIC DNA]</scope>
    <source>
        <strain>ATCC 47054 / DSM 6125 / CFBP 8728 / NCIMB 11950 / KT2440</strain>
    </source>
</reference>
<proteinExistence type="inferred from homology"/>
<name>RS6_PSEPK</name>
<gene>
    <name evidence="1" type="primary">rpsF</name>
    <name type="ordered locus">PP_4877</name>
</gene>
<dbReference type="EMBL" id="AE015451">
    <property type="protein sequence ID" value="AAN70446.1"/>
    <property type="molecule type" value="Genomic_DNA"/>
</dbReference>
<dbReference type="RefSeq" id="NP_746982.1">
    <property type="nucleotide sequence ID" value="NC_002947.4"/>
</dbReference>
<dbReference type="RefSeq" id="WP_003249557.1">
    <property type="nucleotide sequence ID" value="NZ_CP169744.1"/>
</dbReference>
<dbReference type="SMR" id="Q88DE8"/>
<dbReference type="STRING" id="160488.PP_4877"/>
<dbReference type="PaxDb" id="160488-PP_4877"/>
<dbReference type="GeneID" id="83682607"/>
<dbReference type="KEGG" id="ppu:PP_4877"/>
<dbReference type="PATRIC" id="fig|160488.4.peg.5209"/>
<dbReference type="eggNOG" id="COG0360">
    <property type="taxonomic scope" value="Bacteria"/>
</dbReference>
<dbReference type="HOGENOM" id="CLU_113441_6_1_6"/>
<dbReference type="OrthoDB" id="9812702at2"/>
<dbReference type="PhylomeDB" id="Q88DE8"/>
<dbReference type="BioCyc" id="PPUT160488:G1G01-5217-MONOMER"/>
<dbReference type="BRENDA" id="3.1.13.1">
    <property type="organism ID" value="5092"/>
</dbReference>
<dbReference type="Proteomes" id="UP000000556">
    <property type="component" value="Chromosome"/>
</dbReference>
<dbReference type="GO" id="GO:0022627">
    <property type="term" value="C:cytosolic small ribosomal subunit"/>
    <property type="evidence" value="ECO:0007669"/>
    <property type="project" value="TreeGrafter"/>
</dbReference>
<dbReference type="GO" id="GO:0070181">
    <property type="term" value="F:small ribosomal subunit rRNA binding"/>
    <property type="evidence" value="ECO:0007669"/>
    <property type="project" value="TreeGrafter"/>
</dbReference>
<dbReference type="GO" id="GO:0003735">
    <property type="term" value="F:structural constituent of ribosome"/>
    <property type="evidence" value="ECO:0007669"/>
    <property type="project" value="InterPro"/>
</dbReference>
<dbReference type="GO" id="GO:0006412">
    <property type="term" value="P:translation"/>
    <property type="evidence" value="ECO:0007669"/>
    <property type="project" value="UniProtKB-UniRule"/>
</dbReference>
<dbReference type="CDD" id="cd00473">
    <property type="entry name" value="bS6"/>
    <property type="match status" value="1"/>
</dbReference>
<dbReference type="FunFam" id="3.30.70.60:FF:000003">
    <property type="entry name" value="30S ribosomal protein S6"/>
    <property type="match status" value="1"/>
</dbReference>
<dbReference type="Gene3D" id="3.30.70.60">
    <property type="match status" value="1"/>
</dbReference>
<dbReference type="HAMAP" id="MF_00360">
    <property type="entry name" value="Ribosomal_bS6"/>
    <property type="match status" value="1"/>
</dbReference>
<dbReference type="InterPro" id="IPR000529">
    <property type="entry name" value="Ribosomal_bS6"/>
</dbReference>
<dbReference type="InterPro" id="IPR020815">
    <property type="entry name" value="Ribosomal_bS6_CS"/>
</dbReference>
<dbReference type="InterPro" id="IPR035980">
    <property type="entry name" value="Ribosomal_bS6_sf"/>
</dbReference>
<dbReference type="InterPro" id="IPR020814">
    <property type="entry name" value="Ribosomal_S6_plastid/chlpt"/>
</dbReference>
<dbReference type="InterPro" id="IPR014717">
    <property type="entry name" value="Transl_elong_EF1B/ribsomal_bS6"/>
</dbReference>
<dbReference type="NCBIfam" id="TIGR00166">
    <property type="entry name" value="S6"/>
    <property type="match status" value="1"/>
</dbReference>
<dbReference type="PANTHER" id="PTHR21011">
    <property type="entry name" value="MITOCHONDRIAL 28S RIBOSOMAL PROTEIN S6"/>
    <property type="match status" value="1"/>
</dbReference>
<dbReference type="PANTHER" id="PTHR21011:SF1">
    <property type="entry name" value="SMALL RIBOSOMAL SUBUNIT PROTEIN BS6M"/>
    <property type="match status" value="1"/>
</dbReference>
<dbReference type="Pfam" id="PF01250">
    <property type="entry name" value="Ribosomal_S6"/>
    <property type="match status" value="1"/>
</dbReference>
<dbReference type="SUPFAM" id="SSF54995">
    <property type="entry name" value="Ribosomal protein S6"/>
    <property type="match status" value="1"/>
</dbReference>
<dbReference type="PROSITE" id="PS01048">
    <property type="entry name" value="RIBOSOMAL_S6"/>
    <property type="match status" value="1"/>
</dbReference>
<keyword id="KW-1185">Reference proteome</keyword>
<keyword id="KW-0687">Ribonucleoprotein</keyword>
<keyword id="KW-0689">Ribosomal protein</keyword>
<keyword id="KW-0694">RNA-binding</keyword>
<keyword id="KW-0699">rRNA-binding</keyword>
<organism>
    <name type="scientific">Pseudomonas putida (strain ATCC 47054 / DSM 6125 / CFBP 8728 / NCIMB 11950 / KT2440)</name>
    <dbReference type="NCBI Taxonomy" id="160488"/>
    <lineage>
        <taxon>Bacteria</taxon>
        <taxon>Pseudomonadati</taxon>
        <taxon>Pseudomonadota</taxon>
        <taxon>Gammaproteobacteria</taxon>
        <taxon>Pseudomonadales</taxon>
        <taxon>Pseudomonadaceae</taxon>
        <taxon>Pseudomonas</taxon>
    </lineage>
</organism>